<evidence type="ECO:0000255" key="1">
    <source>
        <dbReference type="HAMAP-Rule" id="MF_00707"/>
    </source>
</evidence>
<feature type="chain" id="PRO_0000206475" description="UPF0735 ACT domain-containing protein SAV1643">
    <location>
        <begin position="1"/>
        <end position="152"/>
    </location>
</feature>
<feature type="domain" description="ACT" evidence="1">
    <location>
        <begin position="75"/>
        <end position="150"/>
    </location>
</feature>
<accession>P67640</accession>
<accession>Q99TL0</accession>
<organism>
    <name type="scientific">Staphylococcus aureus (strain Mu50 / ATCC 700699)</name>
    <dbReference type="NCBI Taxonomy" id="158878"/>
    <lineage>
        <taxon>Bacteria</taxon>
        <taxon>Bacillati</taxon>
        <taxon>Bacillota</taxon>
        <taxon>Bacilli</taxon>
        <taxon>Bacillales</taxon>
        <taxon>Staphylococcaceae</taxon>
        <taxon>Staphylococcus</taxon>
    </lineage>
</organism>
<proteinExistence type="inferred from homology"/>
<name>Y1643_STAAM</name>
<comment type="similarity">
    <text evidence="1">Belongs to the UPF0735 family.</text>
</comment>
<gene>
    <name type="ordered locus">SAV1643</name>
</gene>
<sequence>MMDNKDYKKFYLIREDVLPESVVKTLKIKDALKSDPTLSIYDAVKQFDLSRSAFYKYRETIFPVDDKMLDHREFTLILYVTDIVGMLARVLDVISKLELSVLTIHQSIPMEEKATITLSLNAKSKETSVEDVIGALRNLDYVSKVELISMSM</sequence>
<reference key="1">
    <citation type="journal article" date="2001" name="Lancet">
        <title>Whole genome sequencing of meticillin-resistant Staphylococcus aureus.</title>
        <authorList>
            <person name="Kuroda M."/>
            <person name="Ohta T."/>
            <person name="Uchiyama I."/>
            <person name="Baba T."/>
            <person name="Yuzawa H."/>
            <person name="Kobayashi I."/>
            <person name="Cui L."/>
            <person name="Oguchi A."/>
            <person name="Aoki K."/>
            <person name="Nagai Y."/>
            <person name="Lian J.-Q."/>
            <person name="Ito T."/>
            <person name="Kanamori M."/>
            <person name="Matsumaru H."/>
            <person name="Maruyama A."/>
            <person name="Murakami H."/>
            <person name="Hosoyama A."/>
            <person name="Mizutani-Ui Y."/>
            <person name="Takahashi N.K."/>
            <person name="Sawano T."/>
            <person name="Inoue R."/>
            <person name="Kaito C."/>
            <person name="Sekimizu K."/>
            <person name="Hirakawa H."/>
            <person name="Kuhara S."/>
            <person name="Goto S."/>
            <person name="Yabuzaki J."/>
            <person name="Kanehisa M."/>
            <person name="Yamashita A."/>
            <person name="Oshima K."/>
            <person name="Furuya K."/>
            <person name="Yoshino C."/>
            <person name="Shiba T."/>
            <person name="Hattori M."/>
            <person name="Ogasawara N."/>
            <person name="Hayashi H."/>
            <person name="Hiramatsu K."/>
        </authorList>
    </citation>
    <scope>NUCLEOTIDE SEQUENCE [LARGE SCALE GENOMIC DNA]</scope>
    <source>
        <strain>Mu50 / ATCC 700699</strain>
    </source>
</reference>
<dbReference type="EMBL" id="BA000017">
    <property type="protein sequence ID" value="BAB57805.1"/>
    <property type="molecule type" value="Genomic_DNA"/>
</dbReference>
<dbReference type="KEGG" id="sav:SAV1643"/>
<dbReference type="HOGENOM" id="CLU_128147_0_0_9"/>
<dbReference type="Proteomes" id="UP000002481">
    <property type="component" value="Chromosome"/>
</dbReference>
<dbReference type="Gene3D" id="3.30.70.260">
    <property type="match status" value="1"/>
</dbReference>
<dbReference type="HAMAP" id="MF_00707">
    <property type="entry name" value="UPF0735"/>
    <property type="match status" value="1"/>
</dbReference>
<dbReference type="InterPro" id="IPR045865">
    <property type="entry name" value="ACT-like_dom_sf"/>
</dbReference>
<dbReference type="InterPro" id="IPR002912">
    <property type="entry name" value="ACT_dom"/>
</dbReference>
<dbReference type="InterPro" id="IPR008310">
    <property type="entry name" value="UPF0735_ACT_dom-cont"/>
</dbReference>
<dbReference type="NCBIfam" id="NF003361">
    <property type="entry name" value="PRK04435.1"/>
    <property type="match status" value="1"/>
</dbReference>
<dbReference type="PIRSF" id="PIRSF025624">
    <property type="entry name" value="ACT_PheB"/>
    <property type="match status" value="1"/>
</dbReference>
<dbReference type="SUPFAM" id="SSF55021">
    <property type="entry name" value="ACT-like"/>
    <property type="match status" value="1"/>
</dbReference>
<dbReference type="PROSITE" id="PS51671">
    <property type="entry name" value="ACT"/>
    <property type="match status" value="1"/>
</dbReference>
<protein>
    <recommendedName>
        <fullName evidence="1">UPF0735 ACT domain-containing protein SAV1643</fullName>
    </recommendedName>
</protein>